<name>RNH2_SHEFN</name>
<comment type="function">
    <text evidence="1">Endonuclease that specifically degrades the RNA of RNA-DNA hybrids.</text>
</comment>
<comment type="catalytic activity">
    <reaction evidence="1">
        <text>Endonucleolytic cleavage to 5'-phosphomonoester.</text>
        <dbReference type="EC" id="3.1.26.4"/>
    </reaction>
</comment>
<comment type="cofactor">
    <cofactor evidence="1">
        <name>Mn(2+)</name>
        <dbReference type="ChEBI" id="CHEBI:29035"/>
    </cofactor>
    <cofactor evidence="1">
        <name>Mg(2+)</name>
        <dbReference type="ChEBI" id="CHEBI:18420"/>
    </cofactor>
    <text evidence="1">Manganese or magnesium. Binds 1 divalent metal ion per monomer in the absence of substrate. May bind a second metal ion after substrate binding.</text>
</comment>
<comment type="subcellular location">
    <subcellularLocation>
        <location evidence="1">Cytoplasm</location>
    </subcellularLocation>
</comment>
<comment type="similarity">
    <text evidence="1">Belongs to the RNase HII family.</text>
</comment>
<protein>
    <recommendedName>
        <fullName evidence="1">Ribonuclease HII</fullName>
        <shortName evidence="1">RNase HII</shortName>
        <ecNumber evidence="1">3.1.26.4</ecNumber>
    </recommendedName>
</protein>
<gene>
    <name evidence="1" type="primary">rnhB</name>
    <name type="ordered locus">Sfri_1284</name>
</gene>
<feature type="chain" id="PRO_0000334956" description="Ribonuclease HII">
    <location>
        <begin position="1"/>
        <end position="212"/>
    </location>
</feature>
<feature type="domain" description="RNase H type-2" evidence="2">
    <location>
        <begin position="22"/>
        <end position="211"/>
    </location>
</feature>
<feature type="binding site" evidence="1">
    <location>
        <position position="28"/>
    </location>
    <ligand>
        <name>a divalent metal cation</name>
        <dbReference type="ChEBI" id="CHEBI:60240"/>
    </ligand>
</feature>
<feature type="binding site" evidence="1">
    <location>
        <position position="29"/>
    </location>
    <ligand>
        <name>a divalent metal cation</name>
        <dbReference type="ChEBI" id="CHEBI:60240"/>
    </ligand>
</feature>
<feature type="binding site" evidence="1">
    <location>
        <position position="120"/>
    </location>
    <ligand>
        <name>a divalent metal cation</name>
        <dbReference type="ChEBI" id="CHEBI:60240"/>
    </ligand>
</feature>
<reference key="1">
    <citation type="submission" date="2006-08" db="EMBL/GenBank/DDBJ databases">
        <title>Complete sequence of Shewanella frigidimarina NCIMB 400.</title>
        <authorList>
            <consortium name="US DOE Joint Genome Institute"/>
            <person name="Copeland A."/>
            <person name="Lucas S."/>
            <person name="Lapidus A."/>
            <person name="Barry K."/>
            <person name="Detter J.C."/>
            <person name="Glavina del Rio T."/>
            <person name="Hammon N."/>
            <person name="Israni S."/>
            <person name="Dalin E."/>
            <person name="Tice H."/>
            <person name="Pitluck S."/>
            <person name="Fredrickson J.K."/>
            <person name="Kolker E."/>
            <person name="McCuel L.A."/>
            <person name="DiChristina T."/>
            <person name="Nealson K.H."/>
            <person name="Newman D."/>
            <person name="Tiedje J.M."/>
            <person name="Zhou J."/>
            <person name="Romine M.F."/>
            <person name="Culley D.E."/>
            <person name="Serres M."/>
            <person name="Chertkov O."/>
            <person name="Brettin T."/>
            <person name="Bruce D."/>
            <person name="Han C."/>
            <person name="Tapia R."/>
            <person name="Gilna P."/>
            <person name="Schmutz J."/>
            <person name="Larimer F."/>
            <person name="Land M."/>
            <person name="Hauser L."/>
            <person name="Kyrpides N."/>
            <person name="Mikhailova N."/>
            <person name="Richardson P."/>
        </authorList>
    </citation>
    <scope>NUCLEOTIDE SEQUENCE [LARGE SCALE GENOMIC DNA]</scope>
    <source>
        <strain>NCIMB 400</strain>
    </source>
</reference>
<keyword id="KW-0963">Cytoplasm</keyword>
<keyword id="KW-0255">Endonuclease</keyword>
<keyword id="KW-0378">Hydrolase</keyword>
<keyword id="KW-0464">Manganese</keyword>
<keyword id="KW-0479">Metal-binding</keyword>
<keyword id="KW-0540">Nuclease</keyword>
<keyword id="KW-1185">Reference proteome</keyword>
<proteinExistence type="inferred from homology"/>
<evidence type="ECO:0000255" key="1">
    <source>
        <dbReference type="HAMAP-Rule" id="MF_00052"/>
    </source>
</evidence>
<evidence type="ECO:0000255" key="2">
    <source>
        <dbReference type="PROSITE-ProRule" id="PRU01319"/>
    </source>
</evidence>
<dbReference type="EC" id="3.1.26.4" evidence="1"/>
<dbReference type="EMBL" id="CP000447">
    <property type="protein sequence ID" value="ABI71137.1"/>
    <property type="molecule type" value="Genomic_DNA"/>
</dbReference>
<dbReference type="RefSeq" id="WP_011636758.1">
    <property type="nucleotide sequence ID" value="NC_008345.1"/>
</dbReference>
<dbReference type="SMR" id="Q085C8"/>
<dbReference type="STRING" id="318167.Sfri_1284"/>
<dbReference type="KEGG" id="sfr:Sfri_1284"/>
<dbReference type="eggNOG" id="COG0164">
    <property type="taxonomic scope" value="Bacteria"/>
</dbReference>
<dbReference type="HOGENOM" id="CLU_036532_3_2_6"/>
<dbReference type="OrthoDB" id="9803420at2"/>
<dbReference type="Proteomes" id="UP000000684">
    <property type="component" value="Chromosome"/>
</dbReference>
<dbReference type="GO" id="GO:0005737">
    <property type="term" value="C:cytoplasm"/>
    <property type="evidence" value="ECO:0007669"/>
    <property type="project" value="UniProtKB-SubCell"/>
</dbReference>
<dbReference type="GO" id="GO:0032299">
    <property type="term" value="C:ribonuclease H2 complex"/>
    <property type="evidence" value="ECO:0007669"/>
    <property type="project" value="TreeGrafter"/>
</dbReference>
<dbReference type="GO" id="GO:0030145">
    <property type="term" value="F:manganese ion binding"/>
    <property type="evidence" value="ECO:0007669"/>
    <property type="project" value="UniProtKB-UniRule"/>
</dbReference>
<dbReference type="GO" id="GO:0003723">
    <property type="term" value="F:RNA binding"/>
    <property type="evidence" value="ECO:0007669"/>
    <property type="project" value="InterPro"/>
</dbReference>
<dbReference type="GO" id="GO:0004523">
    <property type="term" value="F:RNA-DNA hybrid ribonuclease activity"/>
    <property type="evidence" value="ECO:0007669"/>
    <property type="project" value="UniProtKB-UniRule"/>
</dbReference>
<dbReference type="GO" id="GO:0043137">
    <property type="term" value="P:DNA replication, removal of RNA primer"/>
    <property type="evidence" value="ECO:0007669"/>
    <property type="project" value="TreeGrafter"/>
</dbReference>
<dbReference type="GO" id="GO:0006298">
    <property type="term" value="P:mismatch repair"/>
    <property type="evidence" value="ECO:0007669"/>
    <property type="project" value="TreeGrafter"/>
</dbReference>
<dbReference type="CDD" id="cd07182">
    <property type="entry name" value="RNase_HII_bacteria_HII_like"/>
    <property type="match status" value="1"/>
</dbReference>
<dbReference type="FunFam" id="3.30.420.10:FF:000006">
    <property type="entry name" value="Ribonuclease HII"/>
    <property type="match status" value="1"/>
</dbReference>
<dbReference type="Gene3D" id="3.30.420.10">
    <property type="entry name" value="Ribonuclease H-like superfamily/Ribonuclease H"/>
    <property type="match status" value="1"/>
</dbReference>
<dbReference type="HAMAP" id="MF_00052_B">
    <property type="entry name" value="RNase_HII_B"/>
    <property type="match status" value="1"/>
</dbReference>
<dbReference type="InterPro" id="IPR022898">
    <property type="entry name" value="RNase_HII"/>
</dbReference>
<dbReference type="InterPro" id="IPR001352">
    <property type="entry name" value="RNase_HII/HIII"/>
</dbReference>
<dbReference type="InterPro" id="IPR024567">
    <property type="entry name" value="RNase_HII/HIII_dom"/>
</dbReference>
<dbReference type="InterPro" id="IPR012337">
    <property type="entry name" value="RNaseH-like_sf"/>
</dbReference>
<dbReference type="InterPro" id="IPR036397">
    <property type="entry name" value="RNaseH_sf"/>
</dbReference>
<dbReference type="NCBIfam" id="NF000594">
    <property type="entry name" value="PRK00015.1-1"/>
    <property type="match status" value="1"/>
</dbReference>
<dbReference type="NCBIfam" id="NF000595">
    <property type="entry name" value="PRK00015.1-3"/>
    <property type="match status" value="1"/>
</dbReference>
<dbReference type="NCBIfam" id="NF000596">
    <property type="entry name" value="PRK00015.1-4"/>
    <property type="match status" value="1"/>
</dbReference>
<dbReference type="PANTHER" id="PTHR10954">
    <property type="entry name" value="RIBONUCLEASE H2 SUBUNIT A"/>
    <property type="match status" value="1"/>
</dbReference>
<dbReference type="PANTHER" id="PTHR10954:SF18">
    <property type="entry name" value="RIBONUCLEASE HII"/>
    <property type="match status" value="1"/>
</dbReference>
<dbReference type="Pfam" id="PF01351">
    <property type="entry name" value="RNase_HII"/>
    <property type="match status" value="1"/>
</dbReference>
<dbReference type="SUPFAM" id="SSF53098">
    <property type="entry name" value="Ribonuclease H-like"/>
    <property type="match status" value="1"/>
</dbReference>
<dbReference type="PROSITE" id="PS51975">
    <property type="entry name" value="RNASE_H_2"/>
    <property type="match status" value="1"/>
</dbReference>
<accession>Q085C8</accession>
<sequence length="212" mass="22719">MSTLSVVIKDITPEQVAIISQGLVAGVDEVGRGPLIGDVVTAAVILDPNKPIVGLNDSKKLSEKRRNALYQQIMDNALSVSVGRASPAEIDELNILHATMLAMQRAVAGLSILPERVLVDGNRVPDFGIASHAIIKGDGLVAAISAASIIAKVTRDAEMDTLDSQYPQYGFAKHKGYPTKAHFEALALYGVLPDHRKSFKPVADRILLQNTF</sequence>
<organism>
    <name type="scientific">Shewanella frigidimarina (strain NCIMB 400)</name>
    <dbReference type="NCBI Taxonomy" id="318167"/>
    <lineage>
        <taxon>Bacteria</taxon>
        <taxon>Pseudomonadati</taxon>
        <taxon>Pseudomonadota</taxon>
        <taxon>Gammaproteobacteria</taxon>
        <taxon>Alteromonadales</taxon>
        <taxon>Shewanellaceae</taxon>
        <taxon>Shewanella</taxon>
    </lineage>
</organism>